<feature type="chain" id="PRO_1000066545" description="Acyl carrier protein">
    <location>
        <begin position="1"/>
        <end position="77"/>
    </location>
</feature>
<feature type="domain" description="Carrier" evidence="2">
    <location>
        <begin position="2"/>
        <end position="77"/>
    </location>
</feature>
<feature type="modified residue" description="O-(pantetheine 4'-phosphoryl)serine" evidence="2">
    <location>
        <position position="37"/>
    </location>
</feature>
<dbReference type="EMBL" id="AM286690">
    <property type="protein sequence ID" value="CAL16518.1"/>
    <property type="molecule type" value="Genomic_DNA"/>
</dbReference>
<dbReference type="RefSeq" id="WP_007149764.1">
    <property type="nucleotide sequence ID" value="NC_008260.1"/>
</dbReference>
<dbReference type="SMR" id="Q0VQN0"/>
<dbReference type="STRING" id="393595.ABO_1070"/>
<dbReference type="KEGG" id="abo:ABO_1070"/>
<dbReference type="eggNOG" id="COG0236">
    <property type="taxonomic scope" value="Bacteria"/>
</dbReference>
<dbReference type="HOGENOM" id="CLU_108696_5_1_6"/>
<dbReference type="OrthoDB" id="9804551at2"/>
<dbReference type="UniPathway" id="UPA00094"/>
<dbReference type="Proteomes" id="UP000008871">
    <property type="component" value="Chromosome"/>
</dbReference>
<dbReference type="GO" id="GO:0005829">
    <property type="term" value="C:cytosol"/>
    <property type="evidence" value="ECO:0007669"/>
    <property type="project" value="TreeGrafter"/>
</dbReference>
<dbReference type="GO" id="GO:0016020">
    <property type="term" value="C:membrane"/>
    <property type="evidence" value="ECO:0007669"/>
    <property type="project" value="GOC"/>
</dbReference>
<dbReference type="GO" id="GO:0000035">
    <property type="term" value="F:acyl binding"/>
    <property type="evidence" value="ECO:0007669"/>
    <property type="project" value="TreeGrafter"/>
</dbReference>
<dbReference type="GO" id="GO:0000036">
    <property type="term" value="F:acyl carrier activity"/>
    <property type="evidence" value="ECO:0007669"/>
    <property type="project" value="UniProtKB-UniRule"/>
</dbReference>
<dbReference type="GO" id="GO:0009245">
    <property type="term" value="P:lipid A biosynthetic process"/>
    <property type="evidence" value="ECO:0007669"/>
    <property type="project" value="TreeGrafter"/>
</dbReference>
<dbReference type="FunFam" id="1.10.1200.10:FF:000001">
    <property type="entry name" value="Acyl carrier protein"/>
    <property type="match status" value="1"/>
</dbReference>
<dbReference type="Gene3D" id="1.10.1200.10">
    <property type="entry name" value="ACP-like"/>
    <property type="match status" value="1"/>
</dbReference>
<dbReference type="HAMAP" id="MF_01217">
    <property type="entry name" value="Acyl_carrier"/>
    <property type="match status" value="1"/>
</dbReference>
<dbReference type="InterPro" id="IPR003231">
    <property type="entry name" value="ACP"/>
</dbReference>
<dbReference type="InterPro" id="IPR036736">
    <property type="entry name" value="ACP-like_sf"/>
</dbReference>
<dbReference type="InterPro" id="IPR009081">
    <property type="entry name" value="PP-bd_ACP"/>
</dbReference>
<dbReference type="InterPro" id="IPR006162">
    <property type="entry name" value="Ppantetheine_attach_site"/>
</dbReference>
<dbReference type="NCBIfam" id="TIGR00517">
    <property type="entry name" value="acyl_carrier"/>
    <property type="match status" value="1"/>
</dbReference>
<dbReference type="NCBIfam" id="NF002148">
    <property type="entry name" value="PRK00982.1-2"/>
    <property type="match status" value="1"/>
</dbReference>
<dbReference type="NCBIfam" id="NF002149">
    <property type="entry name" value="PRK00982.1-3"/>
    <property type="match status" value="1"/>
</dbReference>
<dbReference type="NCBIfam" id="NF002150">
    <property type="entry name" value="PRK00982.1-4"/>
    <property type="match status" value="1"/>
</dbReference>
<dbReference type="NCBIfam" id="NF002151">
    <property type="entry name" value="PRK00982.1-5"/>
    <property type="match status" value="1"/>
</dbReference>
<dbReference type="PANTHER" id="PTHR20863">
    <property type="entry name" value="ACYL CARRIER PROTEIN"/>
    <property type="match status" value="1"/>
</dbReference>
<dbReference type="PANTHER" id="PTHR20863:SF76">
    <property type="entry name" value="CARRIER DOMAIN-CONTAINING PROTEIN"/>
    <property type="match status" value="1"/>
</dbReference>
<dbReference type="Pfam" id="PF00550">
    <property type="entry name" value="PP-binding"/>
    <property type="match status" value="1"/>
</dbReference>
<dbReference type="SUPFAM" id="SSF47336">
    <property type="entry name" value="ACP-like"/>
    <property type="match status" value="1"/>
</dbReference>
<dbReference type="PROSITE" id="PS50075">
    <property type="entry name" value="CARRIER"/>
    <property type="match status" value="1"/>
</dbReference>
<dbReference type="PROSITE" id="PS00012">
    <property type="entry name" value="PHOSPHOPANTETHEINE"/>
    <property type="match status" value="1"/>
</dbReference>
<keyword id="KW-0963">Cytoplasm</keyword>
<keyword id="KW-0275">Fatty acid biosynthesis</keyword>
<keyword id="KW-0276">Fatty acid metabolism</keyword>
<keyword id="KW-0444">Lipid biosynthesis</keyword>
<keyword id="KW-0443">Lipid metabolism</keyword>
<keyword id="KW-0596">Phosphopantetheine</keyword>
<keyword id="KW-0597">Phosphoprotein</keyword>
<keyword id="KW-1185">Reference proteome</keyword>
<name>ACP_ALCBS</name>
<sequence>MSSIEERVNKIIVEQLGVKPEDVKSEASFVEDLGADSLDTVELVMALEEEFETEIPDEEAEKISTVQSAVDYIKAHS</sequence>
<reference key="1">
    <citation type="journal article" date="2006" name="Nat. Biotechnol.">
        <title>Genome sequence of the ubiquitous hydrocarbon-degrading marine bacterium Alcanivorax borkumensis.</title>
        <authorList>
            <person name="Schneiker S."/>
            <person name="Martins dos Santos V.A.P."/>
            <person name="Bartels D."/>
            <person name="Bekel T."/>
            <person name="Brecht M."/>
            <person name="Buhrmester J."/>
            <person name="Chernikova T.N."/>
            <person name="Denaro R."/>
            <person name="Ferrer M."/>
            <person name="Gertler C."/>
            <person name="Goesmann A."/>
            <person name="Golyshina O.V."/>
            <person name="Kaminski F."/>
            <person name="Khachane A.N."/>
            <person name="Lang S."/>
            <person name="Linke B."/>
            <person name="McHardy A.C."/>
            <person name="Meyer F."/>
            <person name="Nechitaylo T."/>
            <person name="Puehler A."/>
            <person name="Regenhardt D."/>
            <person name="Rupp O."/>
            <person name="Sabirova J.S."/>
            <person name="Selbitschka W."/>
            <person name="Yakimov M.M."/>
            <person name="Timmis K.N."/>
            <person name="Vorhoelter F.-J."/>
            <person name="Weidner S."/>
            <person name="Kaiser O."/>
            <person name="Golyshin P.N."/>
        </authorList>
    </citation>
    <scope>NUCLEOTIDE SEQUENCE [LARGE SCALE GENOMIC DNA]</scope>
    <source>
        <strain>ATCC 700651 / DSM 11573 / NCIMB 13689 / SK2</strain>
    </source>
</reference>
<comment type="function">
    <text evidence="1">Carrier of the growing fatty acid chain in fatty acid biosynthesis.</text>
</comment>
<comment type="pathway">
    <text evidence="1">Lipid metabolism; fatty acid biosynthesis.</text>
</comment>
<comment type="subcellular location">
    <subcellularLocation>
        <location evidence="1">Cytoplasm</location>
    </subcellularLocation>
</comment>
<comment type="PTM">
    <text evidence="1">4'-phosphopantetheine is transferred from CoA to a specific serine of apo-ACP by AcpS. This modification is essential for activity because fatty acids are bound in thioester linkage to the sulfhydryl of the prosthetic group.</text>
</comment>
<comment type="similarity">
    <text evidence="1">Belongs to the acyl carrier protein (ACP) family.</text>
</comment>
<proteinExistence type="inferred from homology"/>
<accession>Q0VQN0</accession>
<gene>
    <name evidence="1" type="primary">acpP</name>
    <name type="ordered locus">ABO_1070</name>
</gene>
<evidence type="ECO:0000255" key="1">
    <source>
        <dbReference type="HAMAP-Rule" id="MF_01217"/>
    </source>
</evidence>
<evidence type="ECO:0000255" key="2">
    <source>
        <dbReference type="PROSITE-ProRule" id="PRU00258"/>
    </source>
</evidence>
<protein>
    <recommendedName>
        <fullName evidence="1">Acyl carrier protein</fullName>
        <shortName evidence="1">ACP</shortName>
    </recommendedName>
</protein>
<organism>
    <name type="scientific">Alcanivorax borkumensis (strain ATCC 700651 / DSM 11573 / NCIMB 13689 / SK2)</name>
    <dbReference type="NCBI Taxonomy" id="393595"/>
    <lineage>
        <taxon>Bacteria</taxon>
        <taxon>Pseudomonadati</taxon>
        <taxon>Pseudomonadota</taxon>
        <taxon>Gammaproteobacteria</taxon>
        <taxon>Oceanospirillales</taxon>
        <taxon>Alcanivoracaceae</taxon>
        <taxon>Alcanivorax</taxon>
    </lineage>
</organism>